<reference key="1">
    <citation type="journal article" date="2008" name="Genomics">
        <title>Evolution in the laboratory: the genome of Halobacterium salinarum strain R1 compared to that of strain NRC-1.</title>
        <authorList>
            <person name="Pfeiffer F."/>
            <person name="Schuster S.C."/>
            <person name="Broicher A."/>
            <person name="Falb M."/>
            <person name="Palm P."/>
            <person name="Rodewald K."/>
            <person name="Ruepp A."/>
            <person name="Soppa J."/>
            <person name="Tittor J."/>
            <person name="Oesterhelt D."/>
        </authorList>
    </citation>
    <scope>NUCLEOTIDE SEQUENCE [LARGE SCALE GENOMIC DNA]</scope>
    <source>
        <strain>ATCC 29341 / DSM 671 / R1</strain>
    </source>
</reference>
<accession>B0R3S1</accession>
<keyword id="KW-1003">Cell membrane</keyword>
<keyword id="KW-0444">Lipid biosynthesis</keyword>
<keyword id="KW-0443">Lipid metabolism</keyword>
<keyword id="KW-0460">Magnesium</keyword>
<keyword id="KW-0472">Membrane</keyword>
<keyword id="KW-0594">Phospholipid biosynthesis</keyword>
<keyword id="KW-1208">Phospholipid metabolism</keyword>
<keyword id="KW-0808">Transferase</keyword>
<keyword id="KW-0812">Transmembrane</keyword>
<keyword id="KW-1133">Transmembrane helix</keyword>
<sequence>METGRGLVELARPVNTLAAGALTFIGAFVAGGAVGRPAATGAAVGATWLATAGGNAINDYFDREVDRINDPDRAIPRGAVSPRGALAYSVVLFVGAAALAATLPVLAVCIAALNLAGLLTYTQYLKGRPGAGNALVAYLGGSTFVFGAAAVGSPLAGGVLAALAALSTFAREVIKDVEDLAGDRAAGLRTLPVVVGHQRALAVSAVFVVGAAAASPVPYLVGVFGWWYLVAVCPGVVVMVVAAARSYTDPAAGQRLLKRGQLLAAAAFVVGRLVTP</sequence>
<comment type="function">
    <text evidence="1">Prenyltransferase that catalyzes the transfer of the geranylgeranyl moiety of geranylgeranyl diphosphate (GGPP) to the C2 hydroxyl of (S)-3-O-geranylgeranylglyceryl phosphate (GGGP). This reaction is the second ether-bond-formation step in the biosynthesis of archaeal membrane lipids.</text>
</comment>
<comment type="catalytic activity">
    <reaction evidence="1">
        <text>sn-3-O-(geranylgeranyl)glycerol 1-phosphate + (2E,6E,10E)-geranylgeranyl diphosphate = 2,3-bis-O-(geranylgeranyl)-sn-glycerol 1-phosphate + diphosphate</text>
        <dbReference type="Rhea" id="RHEA:18109"/>
        <dbReference type="ChEBI" id="CHEBI:33019"/>
        <dbReference type="ChEBI" id="CHEBI:57677"/>
        <dbReference type="ChEBI" id="CHEBI:58756"/>
        <dbReference type="ChEBI" id="CHEBI:58837"/>
        <dbReference type="EC" id="2.5.1.42"/>
    </reaction>
</comment>
<comment type="cofactor">
    <cofactor evidence="1">
        <name>Mg(2+)</name>
        <dbReference type="ChEBI" id="CHEBI:18420"/>
    </cofactor>
</comment>
<comment type="pathway">
    <text evidence="1">Membrane lipid metabolism; glycerophospholipid metabolism.</text>
</comment>
<comment type="subcellular location">
    <subcellularLocation>
        <location evidence="1">Cell membrane</location>
        <topology evidence="1">Multi-pass membrane protein</topology>
    </subcellularLocation>
</comment>
<comment type="similarity">
    <text evidence="1">Belongs to the UbiA prenyltransferase family. DGGGP synthase subfamily.</text>
</comment>
<evidence type="ECO:0000255" key="1">
    <source>
        <dbReference type="HAMAP-Rule" id="MF_01286"/>
    </source>
</evidence>
<gene>
    <name type="ordered locus">OE_1921R</name>
</gene>
<protein>
    <recommendedName>
        <fullName evidence="1">Digeranylgeranylglyceryl phosphate synthase</fullName>
        <shortName evidence="1">DGGGP synthase</shortName>
        <shortName evidence="1">DGGGPS</shortName>
        <ecNumber evidence="1">2.5.1.42</ecNumber>
    </recommendedName>
    <alternativeName>
        <fullName evidence="1">(S)-2,3-di-O-geranylgeranylglyceryl phosphate synthase</fullName>
    </alternativeName>
    <alternativeName>
        <fullName evidence="1">Geranylgeranylglycerol-phosphate geranylgeranyltransferase</fullName>
    </alternativeName>
</protein>
<dbReference type="EC" id="2.5.1.42" evidence="1"/>
<dbReference type="EMBL" id="AM774415">
    <property type="protein sequence ID" value="CAP13385.1"/>
    <property type="molecule type" value="Genomic_DNA"/>
</dbReference>
<dbReference type="SMR" id="B0R3S1"/>
<dbReference type="EnsemblBacteria" id="CAP13385">
    <property type="protein sequence ID" value="CAP13385"/>
    <property type="gene ID" value="OE_1921R"/>
</dbReference>
<dbReference type="KEGG" id="hsl:OE_1921R"/>
<dbReference type="HOGENOM" id="CLU_073311_1_1_2"/>
<dbReference type="PhylomeDB" id="B0R3S1"/>
<dbReference type="UniPathway" id="UPA00940"/>
<dbReference type="Proteomes" id="UP000001321">
    <property type="component" value="Chromosome"/>
</dbReference>
<dbReference type="GO" id="GO:0005886">
    <property type="term" value="C:plasma membrane"/>
    <property type="evidence" value="ECO:0007669"/>
    <property type="project" value="UniProtKB-SubCell"/>
</dbReference>
<dbReference type="GO" id="GO:0047295">
    <property type="term" value="F:geranylgeranylglycerol-phosphate geranylgeranyltransferase activity"/>
    <property type="evidence" value="ECO:0007669"/>
    <property type="project" value="UniProtKB-UniRule"/>
</dbReference>
<dbReference type="GO" id="GO:0000287">
    <property type="term" value="F:magnesium ion binding"/>
    <property type="evidence" value="ECO:0007669"/>
    <property type="project" value="UniProtKB-UniRule"/>
</dbReference>
<dbReference type="GO" id="GO:0046474">
    <property type="term" value="P:glycerophospholipid biosynthetic process"/>
    <property type="evidence" value="ECO:0007669"/>
    <property type="project" value="UniProtKB-UniRule"/>
</dbReference>
<dbReference type="CDD" id="cd13961">
    <property type="entry name" value="PT_UbiA_DGGGPS"/>
    <property type="match status" value="1"/>
</dbReference>
<dbReference type="Gene3D" id="1.10.357.140">
    <property type="entry name" value="UbiA prenyltransferase"/>
    <property type="match status" value="1"/>
</dbReference>
<dbReference type="Gene3D" id="1.20.120.1780">
    <property type="entry name" value="UbiA prenyltransferase"/>
    <property type="match status" value="1"/>
</dbReference>
<dbReference type="HAMAP" id="MF_01286">
    <property type="entry name" value="DGGGP_synth"/>
    <property type="match status" value="1"/>
</dbReference>
<dbReference type="InterPro" id="IPR023547">
    <property type="entry name" value="DGGGP_synth"/>
</dbReference>
<dbReference type="InterPro" id="IPR050475">
    <property type="entry name" value="Prenyltransferase_related"/>
</dbReference>
<dbReference type="InterPro" id="IPR000537">
    <property type="entry name" value="UbiA_prenyltransferase"/>
</dbReference>
<dbReference type="InterPro" id="IPR044878">
    <property type="entry name" value="UbiA_sf"/>
</dbReference>
<dbReference type="NCBIfam" id="NF009521">
    <property type="entry name" value="PRK12882.1"/>
    <property type="match status" value="1"/>
</dbReference>
<dbReference type="PANTHER" id="PTHR42723">
    <property type="entry name" value="CHLOROPHYLL SYNTHASE"/>
    <property type="match status" value="1"/>
</dbReference>
<dbReference type="PANTHER" id="PTHR42723:SF1">
    <property type="entry name" value="CHLOROPHYLL SYNTHASE, CHLOROPLASTIC"/>
    <property type="match status" value="1"/>
</dbReference>
<dbReference type="Pfam" id="PF01040">
    <property type="entry name" value="UbiA"/>
    <property type="match status" value="1"/>
</dbReference>
<name>DGGGP_HALS3</name>
<feature type="chain" id="PRO_0000350694" description="Digeranylgeranylglyceryl phosphate synthase">
    <location>
        <begin position="1"/>
        <end position="276"/>
    </location>
</feature>
<feature type="transmembrane region" description="Helical" evidence="1">
    <location>
        <begin position="14"/>
        <end position="34"/>
    </location>
</feature>
<feature type="transmembrane region" description="Helical" evidence="1">
    <location>
        <begin position="90"/>
        <end position="110"/>
    </location>
</feature>
<feature type="transmembrane region" description="Helical" evidence="1">
    <location>
        <begin position="144"/>
        <end position="164"/>
    </location>
</feature>
<feature type="transmembrane region" description="Helical" evidence="1">
    <location>
        <begin position="200"/>
        <end position="220"/>
    </location>
</feature>
<feature type="transmembrane region" description="Helical" evidence="1">
    <location>
        <begin position="221"/>
        <end position="241"/>
    </location>
</feature>
<organism>
    <name type="scientific">Halobacterium salinarum (strain ATCC 29341 / DSM 671 / R1)</name>
    <dbReference type="NCBI Taxonomy" id="478009"/>
    <lineage>
        <taxon>Archaea</taxon>
        <taxon>Methanobacteriati</taxon>
        <taxon>Methanobacteriota</taxon>
        <taxon>Stenosarchaea group</taxon>
        <taxon>Halobacteria</taxon>
        <taxon>Halobacteriales</taxon>
        <taxon>Halobacteriaceae</taxon>
        <taxon>Halobacterium</taxon>
        <taxon>Halobacterium salinarum NRC-34001</taxon>
    </lineage>
</organism>
<proteinExistence type="inferred from homology"/>